<proteinExistence type="inferred from homology"/>
<feature type="chain" id="PRO_0000296924" description="Putative manganese efflux pump MntP">
    <location>
        <begin position="1"/>
        <end position="193"/>
    </location>
</feature>
<feature type="transmembrane region" description="Helical" evidence="1">
    <location>
        <begin position="6"/>
        <end position="26"/>
    </location>
</feature>
<feature type="transmembrane region" description="Helical" evidence="1">
    <location>
        <begin position="39"/>
        <end position="59"/>
    </location>
</feature>
<feature type="transmembrane region" description="Helical" evidence="1">
    <location>
        <begin position="61"/>
        <end position="81"/>
    </location>
</feature>
<feature type="transmembrane region" description="Helical" evidence="1">
    <location>
        <begin position="106"/>
        <end position="126"/>
    </location>
</feature>
<feature type="transmembrane region" description="Helical" evidence="1">
    <location>
        <begin position="132"/>
        <end position="152"/>
    </location>
</feature>
<feature type="transmembrane region" description="Helical" evidence="1">
    <location>
        <begin position="165"/>
        <end position="185"/>
    </location>
</feature>
<organism>
    <name type="scientific">Dehalococcoides mccartyi (strain ATCC BAA-2266 / KCTC 15142 / 195)</name>
    <name type="common">Dehalococcoides ethenogenes (strain 195)</name>
    <dbReference type="NCBI Taxonomy" id="243164"/>
    <lineage>
        <taxon>Bacteria</taxon>
        <taxon>Bacillati</taxon>
        <taxon>Chloroflexota</taxon>
        <taxon>Dehalococcoidia</taxon>
        <taxon>Dehalococcoidales</taxon>
        <taxon>Dehalococcoidaceae</taxon>
        <taxon>Dehalococcoides</taxon>
    </lineage>
</organism>
<gene>
    <name evidence="1" type="primary">mntP</name>
    <name type="ordered locus">DET1134</name>
</gene>
<reference key="1">
    <citation type="journal article" date="2005" name="Science">
        <title>Genome sequence of the PCE-dechlorinating bacterium Dehalococcoides ethenogenes.</title>
        <authorList>
            <person name="Seshadri R."/>
            <person name="Adrian L."/>
            <person name="Fouts D.E."/>
            <person name="Eisen J.A."/>
            <person name="Phillippy A.M."/>
            <person name="Methe B.A."/>
            <person name="Ward N.L."/>
            <person name="Nelson W.C."/>
            <person name="DeBoy R.T."/>
            <person name="Khouri H.M."/>
            <person name="Kolonay J.F."/>
            <person name="Dodson R.J."/>
            <person name="Daugherty S.C."/>
            <person name="Brinkac L.M."/>
            <person name="Sullivan S.A."/>
            <person name="Madupu R."/>
            <person name="Nelson K.E."/>
            <person name="Kang K.H."/>
            <person name="Impraim M."/>
            <person name="Tran K."/>
            <person name="Robinson J.M."/>
            <person name="Forberger H.A."/>
            <person name="Fraser C.M."/>
            <person name="Zinder S.H."/>
            <person name="Heidelberg J.F."/>
        </authorList>
    </citation>
    <scope>NUCLEOTIDE SEQUENCE [LARGE SCALE GENOMIC DNA]</scope>
    <source>
        <strain>ATCC BAA-2266 / KCTC 15142 / 195</strain>
    </source>
</reference>
<protein>
    <recommendedName>
        <fullName evidence="1">Putative manganese efflux pump MntP</fullName>
    </recommendedName>
</protein>
<sequence>MSLLSVVFVALALSADCFAVSIGIACTHTDVKPRIMWRVAGTFGLFQAGMAVIGYYAGLSIADVISSFDHWVAFGLLTVIGGRMVYESVQGEDDQKLVRLDLTRGLGLLGVAIATSIDALAVGLTFSLSETNIGLAALLVGAVSLAVSYLGFKLGNRISHLASRWVGIAGGLILCLIGLKILAEHTLGWDILL</sequence>
<dbReference type="EMBL" id="CP000027">
    <property type="protein sequence ID" value="AAW39566.1"/>
    <property type="molecule type" value="Genomic_DNA"/>
</dbReference>
<dbReference type="RefSeq" id="WP_010936827.1">
    <property type="nucleotide sequence ID" value="NC_002936.3"/>
</dbReference>
<dbReference type="FunCoup" id="Q3Z7F0">
    <property type="interactions" value="25"/>
</dbReference>
<dbReference type="STRING" id="243164.DET1134"/>
<dbReference type="GeneID" id="3229527"/>
<dbReference type="KEGG" id="det:DET1134"/>
<dbReference type="PATRIC" id="fig|243164.10.peg.1066"/>
<dbReference type="eggNOG" id="COG1971">
    <property type="taxonomic scope" value="Bacteria"/>
</dbReference>
<dbReference type="HOGENOM" id="CLU_096410_0_0_0"/>
<dbReference type="InParanoid" id="Q3Z7F0"/>
<dbReference type="Proteomes" id="UP000008289">
    <property type="component" value="Chromosome"/>
</dbReference>
<dbReference type="GO" id="GO:0005886">
    <property type="term" value="C:plasma membrane"/>
    <property type="evidence" value="ECO:0007669"/>
    <property type="project" value="UniProtKB-SubCell"/>
</dbReference>
<dbReference type="GO" id="GO:0005384">
    <property type="term" value="F:manganese ion transmembrane transporter activity"/>
    <property type="evidence" value="ECO:0007669"/>
    <property type="project" value="UniProtKB-UniRule"/>
</dbReference>
<dbReference type="HAMAP" id="MF_01521">
    <property type="entry name" value="MntP_pump"/>
    <property type="match status" value="1"/>
</dbReference>
<dbReference type="InterPro" id="IPR003810">
    <property type="entry name" value="Mntp/YtaF"/>
</dbReference>
<dbReference type="InterPro" id="IPR022929">
    <property type="entry name" value="Put_MntP"/>
</dbReference>
<dbReference type="PANTHER" id="PTHR35529">
    <property type="entry name" value="MANGANESE EFFLUX PUMP MNTP-RELATED"/>
    <property type="match status" value="1"/>
</dbReference>
<dbReference type="PANTHER" id="PTHR35529:SF1">
    <property type="entry name" value="MANGANESE EFFLUX PUMP MNTP-RELATED"/>
    <property type="match status" value="1"/>
</dbReference>
<dbReference type="Pfam" id="PF02659">
    <property type="entry name" value="Mntp"/>
    <property type="match status" value="1"/>
</dbReference>
<name>MNTP_DEHM1</name>
<keyword id="KW-1003">Cell membrane</keyword>
<keyword id="KW-0406">Ion transport</keyword>
<keyword id="KW-0464">Manganese</keyword>
<keyword id="KW-0472">Membrane</keyword>
<keyword id="KW-0812">Transmembrane</keyword>
<keyword id="KW-1133">Transmembrane helix</keyword>
<keyword id="KW-0813">Transport</keyword>
<accession>Q3Z7F0</accession>
<evidence type="ECO:0000255" key="1">
    <source>
        <dbReference type="HAMAP-Rule" id="MF_01521"/>
    </source>
</evidence>
<comment type="function">
    <text evidence="1">Probably functions as a manganese efflux pump.</text>
</comment>
<comment type="subcellular location">
    <subcellularLocation>
        <location evidence="1">Cell membrane</location>
        <topology evidence="1">Multi-pass membrane protein</topology>
    </subcellularLocation>
</comment>
<comment type="similarity">
    <text evidence="1">Belongs to the MntP (TC 9.B.29) family.</text>
</comment>